<name>HSPGC_DICDI</name>
<reference key="1">
    <citation type="journal article" date="2002" name="Nature">
        <title>Sequence and analysis of chromosome 2 of Dictyostelium discoideum.</title>
        <authorList>
            <person name="Gloeckner G."/>
            <person name="Eichinger L."/>
            <person name="Szafranski K."/>
            <person name="Pachebat J.A."/>
            <person name="Bankier A.T."/>
            <person name="Dear P.H."/>
            <person name="Lehmann R."/>
            <person name="Baumgart C."/>
            <person name="Parra G."/>
            <person name="Abril J.F."/>
            <person name="Guigo R."/>
            <person name="Kumpf K."/>
            <person name="Tunggal B."/>
            <person name="Cox E.C."/>
            <person name="Quail M.A."/>
            <person name="Platzer M."/>
            <person name="Rosenthal A."/>
            <person name="Noegel A.A."/>
        </authorList>
    </citation>
    <scope>NUCLEOTIDE SEQUENCE [LARGE SCALE GENOMIC DNA]</scope>
    <source>
        <strain>AX4</strain>
    </source>
</reference>
<reference key="2">
    <citation type="journal article" date="2005" name="Nature">
        <title>The genome of the social amoeba Dictyostelium discoideum.</title>
        <authorList>
            <person name="Eichinger L."/>
            <person name="Pachebat J.A."/>
            <person name="Gloeckner G."/>
            <person name="Rajandream M.A."/>
            <person name="Sucgang R."/>
            <person name="Berriman M."/>
            <person name="Song J."/>
            <person name="Olsen R."/>
            <person name="Szafranski K."/>
            <person name="Xu Q."/>
            <person name="Tunggal B."/>
            <person name="Kummerfeld S."/>
            <person name="Madera M."/>
            <person name="Konfortov B.A."/>
            <person name="Rivero F."/>
            <person name="Bankier A.T."/>
            <person name="Lehmann R."/>
            <person name="Hamlin N."/>
            <person name="Davies R."/>
            <person name="Gaudet P."/>
            <person name="Fey P."/>
            <person name="Pilcher K."/>
            <person name="Chen G."/>
            <person name="Saunders D."/>
            <person name="Sodergren E.J."/>
            <person name="Davis P."/>
            <person name="Kerhornou A."/>
            <person name="Nie X."/>
            <person name="Hall N."/>
            <person name="Anjard C."/>
            <person name="Hemphill L."/>
            <person name="Bason N."/>
            <person name="Farbrother P."/>
            <person name="Desany B."/>
            <person name="Just E."/>
            <person name="Morio T."/>
            <person name="Rost R."/>
            <person name="Churcher C.M."/>
            <person name="Cooper J."/>
            <person name="Haydock S."/>
            <person name="van Driessche N."/>
            <person name="Cronin A."/>
            <person name="Goodhead I."/>
            <person name="Muzny D.M."/>
            <person name="Mourier T."/>
            <person name="Pain A."/>
            <person name="Lu M."/>
            <person name="Harper D."/>
            <person name="Lindsay R."/>
            <person name="Hauser H."/>
            <person name="James K.D."/>
            <person name="Quiles M."/>
            <person name="Madan Babu M."/>
            <person name="Saito T."/>
            <person name="Buchrieser C."/>
            <person name="Wardroper A."/>
            <person name="Felder M."/>
            <person name="Thangavelu M."/>
            <person name="Johnson D."/>
            <person name="Knights A."/>
            <person name="Loulseged H."/>
            <person name="Mungall K.L."/>
            <person name="Oliver K."/>
            <person name="Price C."/>
            <person name="Quail M.A."/>
            <person name="Urushihara H."/>
            <person name="Hernandez J."/>
            <person name="Rabbinowitsch E."/>
            <person name="Steffen D."/>
            <person name="Sanders M."/>
            <person name="Ma J."/>
            <person name="Kohara Y."/>
            <person name="Sharp S."/>
            <person name="Simmonds M.N."/>
            <person name="Spiegler S."/>
            <person name="Tivey A."/>
            <person name="Sugano S."/>
            <person name="White B."/>
            <person name="Walker D."/>
            <person name="Woodward J.R."/>
            <person name="Winckler T."/>
            <person name="Tanaka Y."/>
            <person name="Shaulsky G."/>
            <person name="Schleicher M."/>
            <person name="Weinstock G.M."/>
            <person name="Rosenthal A."/>
            <person name="Cox E.C."/>
            <person name="Chisholm R.L."/>
            <person name="Gibbs R.A."/>
            <person name="Loomis W.F."/>
            <person name="Platzer M."/>
            <person name="Kay R.R."/>
            <person name="Williams J.G."/>
            <person name="Dear P.H."/>
            <person name="Noegel A.A."/>
            <person name="Barrell B.G."/>
            <person name="Kuspa A."/>
        </authorList>
    </citation>
    <scope>NUCLEOTIDE SEQUENCE [LARGE SCALE GENOMIC DNA]</scope>
    <source>
        <strain>AX4</strain>
    </source>
</reference>
<feature type="chain" id="PRO_0000363904" description="Small heat shock protein hspG12">
    <location>
        <begin position="1"/>
        <end position="205"/>
    </location>
</feature>
<feature type="domain" description="sHSP" evidence="1">
    <location>
        <begin position="35"/>
        <end position="205"/>
    </location>
</feature>
<feature type="region of interest" description="Disordered" evidence="2">
    <location>
        <begin position="99"/>
        <end position="147"/>
    </location>
</feature>
<feature type="compositionally biased region" description="Acidic residues" evidence="2">
    <location>
        <begin position="109"/>
        <end position="118"/>
    </location>
</feature>
<feature type="compositionally biased region" description="Basic and acidic residues" evidence="2">
    <location>
        <begin position="134"/>
        <end position="147"/>
    </location>
</feature>
<evidence type="ECO:0000255" key="1">
    <source>
        <dbReference type="PROSITE-ProRule" id="PRU00285"/>
    </source>
</evidence>
<evidence type="ECO:0000256" key="2">
    <source>
        <dbReference type="SAM" id="MobiDB-lite"/>
    </source>
</evidence>
<accession>Q76NU5</accession>
<accession>Q54ZN8</accession>
<comment type="similarity">
    <text evidence="1">Belongs to the small heat shock protein (HSP20) family.</text>
</comment>
<protein>
    <recommendedName>
        <fullName>Small heat shock protein hspG12</fullName>
    </recommendedName>
</protein>
<dbReference type="EMBL" id="AAFI02000020">
    <property type="protein sequence ID" value="EAL68708.1"/>
    <property type="molecule type" value="Genomic_DNA"/>
</dbReference>
<dbReference type="RefSeq" id="XP_642604.1">
    <property type="nucleotide sequence ID" value="XM_637512.1"/>
</dbReference>
<dbReference type="SMR" id="Q76NU5"/>
<dbReference type="STRING" id="44689.Q76NU5"/>
<dbReference type="PaxDb" id="44689-DDB0232123"/>
<dbReference type="EnsemblProtists" id="EAL68708">
    <property type="protein sequence ID" value="EAL68708"/>
    <property type="gene ID" value="DDB_G0277491"/>
</dbReference>
<dbReference type="GeneID" id="8621021"/>
<dbReference type="KEGG" id="ddi:DDB_G0277491"/>
<dbReference type="dictyBase" id="DDB_G0277491">
    <property type="gene designation" value="hspG12"/>
</dbReference>
<dbReference type="VEuPathDB" id="AmoebaDB:DDB_G0277491"/>
<dbReference type="eggNOG" id="KOG0710">
    <property type="taxonomic scope" value="Eukaryota"/>
</dbReference>
<dbReference type="HOGENOM" id="CLU_1328489_0_0_1"/>
<dbReference type="InParanoid" id="Q76NU5"/>
<dbReference type="OMA" id="KNYFESC"/>
<dbReference type="PhylomeDB" id="Q76NU5"/>
<dbReference type="PRO" id="PR:Q76NU5"/>
<dbReference type="Proteomes" id="UP000002195">
    <property type="component" value="Chromosome 2"/>
</dbReference>
<dbReference type="CDD" id="cd06464">
    <property type="entry name" value="ACD_sHsps-like"/>
    <property type="match status" value="1"/>
</dbReference>
<dbReference type="Gene3D" id="2.60.40.790">
    <property type="match status" value="2"/>
</dbReference>
<dbReference type="InterPro" id="IPR002068">
    <property type="entry name" value="A-crystallin/Hsp20_dom"/>
</dbReference>
<dbReference type="InterPro" id="IPR008978">
    <property type="entry name" value="HSP20-like_chaperone"/>
</dbReference>
<dbReference type="InterPro" id="IPR051779">
    <property type="entry name" value="HspG1-11-like"/>
</dbReference>
<dbReference type="PANTHER" id="PTHR46827">
    <property type="entry name" value="HEAT SHOCK PROTEIN DDB_G0288861-RELATED"/>
    <property type="match status" value="1"/>
</dbReference>
<dbReference type="PANTHER" id="PTHR46827:SF1">
    <property type="entry name" value="HEAT SHOCK PROTEIN DDB_G0288861-RELATED"/>
    <property type="match status" value="1"/>
</dbReference>
<dbReference type="Pfam" id="PF00011">
    <property type="entry name" value="HSP20"/>
    <property type="match status" value="2"/>
</dbReference>
<dbReference type="SUPFAM" id="SSF49764">
    <property type="entry name" value="HSP20-like chaperones"/>
    <property type="match status" value="1"/>
</dbReference>
<dbReference type="PROSITE" id="PS01031">
    <property type="entry name" value="SHSP"/>
    <property type="match status" value="1"/>
</dbReference>
<keyword id="KW-1185">Reference proteome</keyword>
<keyword id="KW-0346">Stress response</keyword>
<gene>
    <name type="primary">hspG12</name>
    <name type="ORF">DDB_G0277491</name>
</gene>
<organism>
    <name type="scientific">Dictyostelium discoideum</name>
    <name type="common">Social amoeba</name>
    <dbReference type="NCBI Taxonomy" id="44689"/>
    <lineage>
        <taxon>Eukaryota</taxon>
        <taxon>Amoebozoa</taxon>
        <taxon>Evosea</taxon>
        <taxon>Eumycetozoa</taxon>
        <taxon>Dictyostelia</taxon>
        <taxon>Dictyosteliales</taxon>
        <taxon>Dictyosteliaceae</taxon>
        <taxon>Dictyostelium</taxon>
    </lineage>
</organism>
<sequence>MATIFDILNTLNNNNNNKNYFESCKRQRTNNKTNKTIIDILPPMDVTMTNDKLIIETELAGISKDDIEISINDSILTIQGEKKKNLNKQLIIEKSSSSPSLLDTKEDEASIEEFDEDDIKPKSTETTSTLSNSKENKKDENKSKSTEKKFISERSFGNFKRYLDLTKFLYQLDLNSINTQFENGLLTITINKKLHYSNTIKININ</sequence>
<proteinExistence type="inferred from homology"/>